<gene>
    <name type="primary">Cacna1s</name>
    <name type="synonym">Cach1</name>
    <name type="synonym">Cacn1</name>
    <name type="synonym">Cacnl1a3</name>
    <name type="synonym">Cchl1a3</name>
</gene>
<name>CAC1S_RAT</name>
<reference evidence="9" key="1">
    <citation type="journal article" date="2010" name="J. Physiol. Sci.">
        <title>Voltage-gated Ca2+ channel mRNAs and T-type Ca2+ currents in rat gonadotropin-releasing hormone neurons.</title>
        <authorList>
            <person name="Tanaka N."/>
            <person name="Ishii H."/>
            <person name="Yin C."/>
            <person name="Koyama M."/>
            <person name="Sakuma Y."/>
            <person name="Kato M."/>
        </authorList>
    </citation>
    <scope>NUCLEOTIDE SEQUENCE [MRNA] (ISOFORM 1)</scope>
    <scope>FUNCTION</scope>
    <scope>TRANSPORTER ACTIVITY</scope>
    <source>
        <strain evidence="9">Wistar</strain>
        <tissue evidence="9">Skeletal muscle</tissue>
    </source>
</reference>
<reference key="2">
    <citation type="journal article" date="1992" name="Genomics">
        <title>The gene for the alpha-1 subunit of the skeletal muscle dihydropyridine-sensitive calcium channel (Cchl1a3) maps to mouse chromosome 1.</title>
        <authorList>
            <person name="Chin H."/>
            <person name="Krall M."/>
            <person name="Kim H.-L."/>
            <person name="Kozak C.A."/>
            <person name="Mock B.A."/>
        </authorList>
    </citation>
    <scope>NUCLEOTIDE SEQUENCE [MRNA] OF 714-1850 (ISOFORM 1)</scope>
</reference>
<reference key="3">
    <citation type="journal article" date="1992" name="Proc. Natl. Acad. Sci. U.S.A.">
        <title>Molecular characterization and nephron distribution of a family of transcripts encoding the pore-forming subunit of Ca2+ channels in the kidney.</title>
        <authorList>
            <person name="Yu A.S.L."/>
            <person name="Hebert S.C."/>
            <person name="Brenner B.M."/>
            <person name="Lytton J."/>
        </authorList>
    </citation>
    <scope>NUCLEOTIDE SEQUENCE [MRNA] OF 1310-1404</scope>
    <source>
        <tissue>Kidney</tissue>
    </source>
</reference>
<reference key="4">
    <citation type="journal article" date="1995" name="Proc. Natl. Acad. Sci. U.S.A.">
        <title>Multiple calcium channel transcripts in rat osteosarcoma cells: selective activation of alpha 1D isoform by parathyroid hormone.</title>
        <authorList>
            <person name="Barry E.L.R."/>
            <person name="Gesek F.A."/>
            <person name="Froehner S.C."/>
            <person name="Friedman P.A."/>
        </authorList>
    </citation>
    <scope>NUCLEOTIDE SEQUENCE [MRNA] OF 1072-1371 (ISOFORM ROB1)</scope>
    <source>
        <tissue>Osteosarcoma</tissue>
    </source>
</reference>
<reference key="5">
    <citation type="journal article" date="1990" name="J. Biol. Chem.">
        <title>Cyclic AMP-dependent phosphorylation of two size forms of alpha 1 subunits of L-type calcium channels in rat skeletal muscle cells.</title>
        <authorList>
            <person name="Lai Y."/>
            <person name="Seagar M.J."/>
            <person name="Takahashi M."/>
            <person name="Catterall W.A."/>
        </authorList>
    </citation>
    <scope>PHOSPHORYLATION BY PKA</scope>
</reference>
<reference key="6">
    <citation type="journal article" date="2012" name="Nat. Commun.">
        <title>Quantitative maps of protein phosphorylation sites across 14 different rat organs and tissues.</title>
        <authorList>
            <person name="Lundby A."/>
            <person name="Secher A."/>
            <person name="Lage K."/>
            <person name="Nordsborg N.B."/>
            <person name="Dmytriyev A."/>
            <person name="Lundby C."/>
            <person name="Olsen J.V."/>
        </authorList>
    </citation>
    <scope>PHOSPHORYLATION [LARGE SCALE ANALYSIS] AT SER-393; SER-397; SER-1575; THR-1579 AND SER-1617</scope>
    <scope>IDENTIFICATION BY MASS SPECTROMETRY [LARGE SCALE ANALYSIS]</scope>
</reference>
<accession>Q02485</accession>
<accession>B3XZL8</accession>
<accession>P70484</accession>
<accession>Q01553</accession>
<accession>Q62817</accession>
<organism>
    <name type="scientific">Rattus norvegicus</name>
    <name type="common">Rat</name>
    <dbReference type="NCBI Taxonomy" id="10116"/>
    <lineage>
        <taxon>Eukaryota</taxon>
        <taxon>Metazoa</taxon>
        <taxon>Chordata</taxon>
        <taxon>Craniata</taxon>
        <taxon>Vertebrata</taxon>
        <taxon>Euteleostomi</taxon>
        <taxon>Mammalia</taxon>
        <taxon>Eutheria</taxon>
        <taxon>Euarchontoglires</taxon>
        <taxon>Glires</taxon>
        <taxon>Rodentia</taxon>
        <taxon>Myomorpha</taxon>
        <taxon>Muroidea</taxon>
        <taxon>Muridae</taxon>
        <taxon>Murinae</taxon>
        <taxon>Rattus</taxon>
    </lineage>
</organism>
<dbReference type="EMBL" id="AB374360">
    <property type="protein sequence ID" value="BAG54980.1"/>
    <property type="molecule type" value="mRNA"/>
</dbReference>
<dbReference type="EMBL" id="L04684">
    <property type="protein sequence ID" value="AAA40844.1"/>
    <property type="molecule type" value="mRNA"/>
</dbReference>
<dbReference type="EMBL" id="M99220">
    <property type="protein sequence ID" value="AAA40894.1"/>
    <property type="molecule type" value="mRNA"/>
</dbReference>
<dbReference type="EMBL" id="U31816">
    <property type="protein sequence ID" value="AAA89158.1"/>
    <property type="molecule type" value="mRNA"/>
</dbReference>
<dbReference type="PIR" id="A46422">
    <property type="entry name" value="A46422"/>
</dbReference>
<dbReference type="RefSeq" id="NP_446325.1">
    <molecule id="Q02485-1"/>
    <property type="nucleotide sequence ID" value="NM_053873.1"/>
</dbReference>
<dbReference type="SMR" id="Q02485"/>
<dbReference type="CORUM" id="Q02485"/>
<dbReference type="FunCoup" id="Q02485">
    <property type="interactions" value="658"/>
</dbReference>
<dbReference type="STRING" id="10116.ENSRNOP00000067264"/>
<dbReference type="BindingDB" id="Q02485"/>
<dbReference type="ChEMBL" id="CHEMBL4108"/>
<dbReference type="DrugCentral" id="Q02485"/>
<dbReference type="GuidetoPHARMACOLOGY" id="528"/>
<dbReference type="GlyCosmos" id="Q02485">
    <property type="glycosylation" value="1 site, No reported glycans"/>
</dbReference>
<dbReference type="GlyGen" id="Q02485">
    <property type="glycosylation" value="3 sites"/>
</dbReference>
<dbReference type="iPTMnet" id="Q02485"/>
<dbReference type="PhosphoSitePlus" id="Q02485"/>
<dbReference type="PaxDb" id="10116-ENSRNOP00000067264"/>
<dbReference type="GeneID" id="682930"/>
<dbReference type="KEGG" id="rno:682930"/>
<dbReference type="AGR" id="RGD:70983"/>
<dbReference type="CTD" id="779"/>
<dbReference type="RGD" id="70983">
    <property type="gene designation" value="Cacna1s"/>
</dbReference>
<dbReference type="eggNOG" id="KOG2301">
    <property type="taxonomic scope" value="Eukaryota"/>
</dbReference>
<dbReference type="InParanoid" id="Q02485"/>
<dbReference type="OrthoDB" id="43817at9989"/>
<dbReference type="PRO" id="PR:Q02485"/>
<dbReference type="Proteomes" id="UP000002494">
    <property type="component" value="Unplaced"/>
</dbReference>
<dbReference type="GO" id="GO:0005737">
    <property type="term" value="C:cytoplasm"/>
    <property type="evidence" value="ECO:0000266"/>
    <property type="project" value="RGD"/>
</dbReference>
<dbReference type="GO" id="GO:0044327">
    <property type="term" value="C:dendritic spine head"/>
    <property type="evidence" value="ECO:0000314"/>
    <property type="project" value="RGD"/>
</dbReference>
<dbReference type="GO" id="GO:0031674">
    <property type="term" value="C:I band"/>
    <property type="evidence" value="ECO:0000266"/>
    <property type="project" value="RGD"/>
</dbReference>
<dbReference type="GO" id="GO:1990454">
    <property type="term" value="C:L-type voltage-gated calcium channel complex"/>
    <property type="evidence" value="ECO:0000250"/>
    <property type="project" value="UniProtKB"/>
</dbReference>
<dbReference type="GO" id="GO:0005886">
    <property type="term" value="C:plasma membrane"/>
    <property type="evidence" value="ECO:0000266"/>
    <property type="project" value="RGD"/>
</dbReference>
<dbReference type="GO" id="GO:0042383">
    <property type="term" value="C:sarcolemma"/>
    <property type="evidence" value="ECO:0000314"/>
    <property type="project" value="RGD"/>
</dbReference>
<dbReference type="GO" id="GO:0016529">
    <property type="term" value="C:sarcoplasmic reticulum"/>
    <property type="evidence" value="ECO:0000266"/>
    <property type="project" value="RGD"/>
</dbReference>
<dbReference type="GO" id="GO:0030315">
    <property type="term" value="C:T-tubule"/>
    <property type="evidence" value="ECO:0000250"/>
    <property type="project" value="UniProtKB"/>
</dbReference>
<dbReference type="GO" id="GO:0005891">
    <property type="term" value="C:voltage-gated calcium channel complex"/>
    <property type="evidence" value="ECO:0000314"/>
    <property type="project" value="RGD"/>
</dbReference>
<dbReference type="GO" id="GO:0005516">
    <property type="term" value="F:calmodulin binding"/>
    <property type="evidence" value="ECO:0007669"/>
    <property type="project" value="UniProtKB-KW"/>
</dbReference>
<dbReference type="GO" id="GO:0008331">
    <property type="term" value="F:high voltage-gated calcium channel activity"/>
    <property type="evidence" value="ECO:0000314"/>
    <property type="project" value="RGD"/>
</dbReference>
<dbReference type="GO" id="GO:0046872">
    <property type="term" value="F:metal ion binding"/>
    <property type="evidence" value="ECO:0007669"/>
    <property type="project" value="UniProtKB-KW"/>
</dbReference>
<dbReference type="GO" id="GO:0140677">
    <property type="term" value="F:molecular function activator activity"/>
    <property type="evidence" value="ECO:0000266"/>
    <property type="project" value="RGD"/>
</dbReference>
<dbReference type="GO" id="GO:0036094">
    <property type="term" value="F:small molecule binding"/>
    <property type="evidence" value="ECO:0000266"/>
    <property type="project" value="RGD"/>
</dbReference>
<dbReference type="GO" id="GO:0005245">
    <property type="term" value="F:voltage-gated calcium channel activity"/>
    <property type="evidence" value="ECO:0000314"/>
    <property type="project" value="UniProtKB"/>
</dbReference>
<dbReference type="GO" id="GO:0098703">
    <property type="term" value="P:calcium ion import across plasma membrane"/>
    <property type="evidence" value="ECO:0000318"/>
    <property type="project" value="GO_Central"/>
</dbReference>
<dbReference type="GO" id="GO:0006816">
    <property type="term" value="P:calcium ion transport"/>
    <property type="evidence" value="ECO:0000314"/>
    <property type="project" value="RGD"/>
</dbReference>
<dbReference type="GO" id="GO:0071313">
    <property type="term" value="P:cellular response to caffeine"/>
    <property type="evidence" value="ECO:0000250"/>
    <property type="project" value="UniProtKB"/>
</dbReference>
<dbReference type="GO" id="GO:0007029">
    <property type="term" value="P:endoplasmic reticulum organization"/>
    <property type="evidence" value="ECO:0000266"/>
    <property type="project" value="RGD"/>
</dbReference>
<dbReference type="GO" id="GO:0002074">
    <property type="term" value="P:extraocular skeletal muscle development"/>
    <property type="evidence" value="ECO:0000266"/>
    <property type="project" value="RGD"/>
</dbReference>
<dbReference type="GO" id="GO:0055001">
    <property type="term" value="P:muscle cell development"/>
    <property type="evidence" value="ECO:0000266"/>
    <property type="project" value="RGD"/>
</dbReference>
<dbReference type="GO" id="GO:0006936">
    <property type="term" value="P:muscle contraction"/>
    <property type="evidence" value="ECO:0000250"/>
    <property type="project" value="UniProtKB"/>
</dbReference>
<dbReference type="GO" id="GO:0007520">
    <property type="term" value="P:myoblast fusion"/>
    <property type="evidence" value="ECO:0000266"/>
    <property type="project" value="RGD"/>
</dbReference>
<dbReference type="GO" id="GO:0007528">
    <property type="term" value="P:neuromuscular junction development"/>
    <property type="evidence" value="ECO:0000266"/>
    <property type="project" value="RGD"/>
</dbReference>
<dbReference type="GO" id="GO:0001503">
    <property type="term" value="P:ossification"/>
    <property type="evidence" value="ECO:0000303"/>
    <property type="project" value="RGD"/>
</dbReference>
<dbReference type="GO" id="GO:0051209">
    <property type="term" value="P:release of sequestered calcium ion into cytosol"/>
    <property type="evidence" value="ECO:0000250"/>
    <property type="project" value="UniProtKB"/>
</dbReference>
<dbReference type="GO" id="GO:0061771">
    <property type="term" value="P:response to caloric restriction"/>
    <property type="evidence" value="ECO:0000270"/>
    <property type="project" value="RGD"/>
</dbReference>
<dbReference type="GO" id="GO:0043501">
    <property type="term" value="P:skeletal muscle adaptation"/>
    <property type="evidence" value="ECO:0000266"/>
    <property type="project" value="RGD"/>
</dbReference>
<dbReference type="GO" id="GO:0048741">
    <property type="term" value="P:skeletal muscle fiber development"/>
    <property type="evidence" value="ECO:0000266"/>
    <property type="project" value="RGD"/>
</dbReference>
<dbReference type="GO" id="GO:0007519">
    <property type="term" value="P:skeletal muscle tissue development"/>
    <property type="evidence" value="ECO:0000266"/>
    <property type="project" value="RGD"/>
</dbReference>
<dbReference type="GO" id="GO:0001501">
    <property type="term" value="P:skeletal system development"/>
    <property type="evidence" value="ECO:0000266"/>
    <property type="project" value="RGD"/>
</dbReference>
<dbReference type="GO" id="GO:0006941">
    <property type="term" value="P:striated muscle contraction"/>
    <property type="evidence" value="ECO:0000266"/>
    <property type="project" value="RGD"/>
</dbReference>
<dbReference type="FunFam" id="1.10.287.70:FF:000007">
    <property type="entry name" value="Voltage-dependent L-type calcium channel subunit alpha"/>
    <property type="match status" value="1"/>
</dbReference>
<dbReference type="FunFam" id="1.10.287.70:FF:000009">
    <property type="entry name" value="Voltage-dependent L-type calcium channel subunit alpha"/>
    <property type="match status" value="1"/>
</dbReference>
<dbReference type="FunFam" id="1.10.287.70:FF:000021">
    <property type="entry name" value="Voltage-dependent L-type calcium channel subunit alpha"/>
    <property type="match status" value="1"/>
</dbReference>
<dbReference type="FunFam" id="1.20.120.350:FF:000001">
    <property type="entry name" value="Voltage-dependent L-type calcium channel subunit alpha"/>
    <property type="match status" value="1"/>
</dbReference>
<dbReference type="FunFam" id="1.20.120.350:FF:000006">
    <property type="entry name" value="Voltage-dependent L-type calcium channel subunit alpha"/>
    <property type="match status" value="1"/>
</dbReference>
<dbReference type="FunFam" id="1.20.120.350:FF:000010">
    <property type="entry name" value="Voltage-dependent L-type calcium channel subunit alpha"/>
    <property type="match status" value="1"/>
</dbReference>
<dbReference type="FunFam" id="1.20.120.350:FF:000040">
    <property type="entry name" value="Voltage-dependent L-type calcium channel subunit alpha"/>
    <property type="match status" value="1"/>
</dbReference>
<dbReference type="FunFam" id="1.10.238.10:FF:000063">
    <property type="entry name" value="Voltage-dependent N-type calcium channel subunit alpha"/>
    <property type="match status" value="1"/>
</dbReference>
<dbReference type="Gene3D" id="1.10.287.70">
    <property type="match status" value="4"/>
</dbReference>
<dbReference type="Gene3D" id="6.10.250.2180">
    <property type="match status" value="1"/>
</dbReference>
<dbReference type="Gene3D" id="6.10.250.2500">
    <property type="match status" value="1"/>
</dbReference>
<dbReference type="Gene3D" id="1.20.120.350">
    <property type="entry name" value="Voltage-gated potassium channels. Chain C"/>
    <property type="match status" value="4"/>
</dbReference>
<dbReference type="InterPro" id="IPR031688">
    <property type="entry name" value="CAC1F_C"/>
</dbReference>
<dbReference type="InterPro" id="IPR031649">
    <property type="entry name" value="GPHH_dom"/>
</dbReference>
<dbReference type="InterPro" id="IPR005821">
    <property type="entry name" value="Ion_trans_dom"/>
</dbReference>
<dbReference type="InterPro" id="IPR014873">
    <property type="entry name" value="VDCC_a1su_IQ"/>
</dbReference>
<dbReference type="InterPro" id="IPR050599">
    <property type="entry name" value="VDCC_alpha-1_subunit"/>
</dbReference>
<dbReference type="InterPro" id="IPR005450">
    <property type="entry name" value="VDCC_L_a1ssu"/>
</dbReference>
<dbReference type="InterPro" id="IPR005446">
    <property type="entry name" value="VDCC_L_a1su"/>
</dbReference>
<dbReference type="InterPro" id="IPR002077">
    <property type="entry name" value="VDCCAlpha1"/>
</dbReference>
<dbReference type="InterPro" id="IPR027359">
    <property type="entry name" value="Volt_channel_dom_sf"/>
</dbReference>
<dbReference type="PANTHER" id="PTHR45628">
    <property type="entry name" value="VOLTAGE-DEPENDENT CALCIUM CHANNEL TYPE A SUBUNIT ALPHA-1"/>
    <property type="match status" value="1"/>
</dbReference>
<dbReference type="PANTHER" id="PTHR45628:SF9">
    <property type="entry name" value="VOLTAGE-DEPENDENT L-TYPE CALCIUM CHANNEL SUBUNIT ALPHA-1S"/>
    <property type="match status" value="1"/>
</dbReference>
<dbReference type="Pfam" id="PF08763">
    <property type="entry name" value="Ca_chan_IQ"/>
    <property type="match status" value="1"/>
</dbReference>
<dbReference type="Pfam" id="PF16885">
    <property type="entry name" value="CAC1F_C"/>
    <property type="match status" value="1"/>
</dbReference>
<dbReference type="Pfam" id="PF16905">
    <property type="entry name" value="GPHH"/>
    <property type="match status" value="1"/>
</dbReference>
<dbReference type="Pfam" id="PF00520">
    <property type="entry name" value="Ion_trans"/>
    <property type="match status" value="4"/>
</dbReference>
<dbReference type="PRINTS" id="PR00167">
    <property type="entry name" value="CACHANNEL"/>
</dbReference>
<dbReference type="PRINTS" id="PR01630">
    <property type="entry name" value="LVDCCALPHA1"/>
</dbReference>
<dbReference type="PRINTS" id="PR01634">
    <property type="entry name" value="LVDCCALPHA1S"/>
</dbReference>
<dbReference type="SMART" id="SM01062">
    <property type="entry name" value="Ca_chan_IQ"/>
    <property type="match status" value="1"/>
</dbReference>
<dbReference type="SUPFAM" id="SSF81324">
    <property type="entry name" value="Voltage-gated potassium channels"/>
    <property type="match status" value="4"/>
</dbReference>
<keyword id="KW-0025">Alternative splicing</keyword>
<keyword id="KW-0106">Calcium</keyword>
<keyword id="KW-0107">Calcium channel</keyword>
<keyword id="KW-0109">Calcium transport</keyword>
<keyword id="KW-0112">Calmodulin-binding</keyword>
<keyword id="KW-1003">Cell membrane</keyword>
<keyword id="KW-1015">Disulfide bond</keyword>
<keyword id="KW-0325">Glycoprotein</keyword>
<keyword id="KW-0407">Ion channel</keyword>
<keyword id="KW-0406">Ion transport</keyword>
<keyword id="KW-0472">Membrane</keyword>
<keyword id="KW-0479">Metal-binding</keyword>
<keyword id="KW-0597">Phosphoprotein</keyword>
<keyword id="KW-1185">Reference proteome</keyword>
<keyword id="KW-0677">Repeat</keyword>
<keyword id="KW-0812">Transmembrane</keyword>
<keyword id="KW-1133">Transmembrane helix</keyword>
<keyword id="KW-0813">Transport</keyword>
<keyword id="KW-0851">Voltage-gated channel</keyword>
<evidence type="ECO:0000250" key="1">
    <source>
        <dbReference type="UniProtKB" id="P07293"/>
    </source>
</evidence>
<evidence type="ECO:0000250" key="2">
    <source>
        <dbReference type="UniProtKB" id="Q02789"/>
    </source>
</evidence>
<evidence type="ECO:0000250" key="3">
    <source>
        <dbReference type="UniProtKB" id="Q13698"/>
    </source>
</evidence>
<evidence type="ECO:0000255" key="4"/>
<evidence type="ECO:0000256" key="5">
    <source>
        <dbReference type="SAM" id="MobiDB-lite"/>
    </source>
</evidence>
<evidence type="ECO:0000269" key="6">
    <source>
    </source>
</evidence>
<evidence type="ECO:0000303" key="7">
    <source>
    </source>
</evidence>
<evidence type="ECO:0000305" key="8"/>
<evidence type="ECO:0000312" key="9">
    <source>
        <dbReference type="EMBL" id="BAG54980.1"/>
    </source>
</evidence>
<evidence type="ECO:0007744" key="10">
    <source>
    </source>
</evidence>
<sequence>MEPSSPQDEGLRKKQPKKPVPEILPRPPRALFCLTLQNPLRKACISVVEWKPFETIILLTIFANCVALAVYLPMPEDDNNTLNLGLEKLEYFFLIVFSIEAAMKIIAYGFLFHQDAYLRSGWNVLDFIIVFLGVFTAILEQVNIIQTNTAPMSSKGAGLDVKALRAFRVLRPLRLVSGVPSLQVVLNSIFKAMLPLFHIALLVLFMVIIYAIIGLELFKGKMHKTCYFIGTDIVATVENEKPSPCARTGSGRPCTINGSECRGGWPGPNHGITHFDNFGFSMLTVYQCISMEGWTDVLYWVNDAIGNEWPWIYFVTLILLGSFFILNLVLGVLSGEFTKEREKAKSRGTFQKLREKQQLEEDLRGYMSWITQGEVMDVDDLREGKLSLDEGGSDTESLYEIEGLNKIIQFIRHWRQWNRVFRWKCHDLVKSKVFYWLVILIVALNTLSIASEHHNQPLWLTHLQDVANRVLLALFTIEMLMKMYGLGLRQYFMSIFNRFDCFVVCSGILEILLVESGAMTPLGISVLRCIRLLRLFKITKYWTSLSNLVASLLNSIRSIASLLLLLFLFMIIFALLGMQLFGGRYDFEDTEVRRSNFDNFPQALISVFQVLTGEDWNSVMYNGIMAYGGPSYPGVLVCIYFIILFVCGNYILLNVFLAIAVDNLAEAESLTSAQKAKAEERKRRKMSRGLPDKSEEERSTMTKKLEQKPKGEGIPTTAKLKIDEFESNVNEVKDPYPSADFPGDDEEDEPEIPASPRPRPLAELQLKEKAVPIPEASSFFIFSPTNKIRVLCHRIVNATWFTNFILLFILLSSAALAAEDPIRADSMRNQILEYFDYVFTAVFTVEIVLKMTTYGAFLHKGSFCRNYFNILDLLVVAVSLISMGLESSAISVVKILRVLRVLRPLRAINRAKGLKHVVQCVFVAIRTIGNIVLVTTLLQFMFACIGVQLFKGKFYSCNDLSKMTEEECRGYYYIYKDGDPTQIELRPRQWIHNDFHFDNVLSAMMSLFTVSTFEGWPQLLYKAIDSNEEDTGPVYNNRVEMAIFFIIYIILIAFFMMNIFVGFVIVTFQEQGETEYKNCELDKNQRQCVQYALKARPLRCYIPKNPYQYQVWYVVTSSYFEYLMFALIMLNTICLGMQHYNQSEQMNHISDILNVAFTIIFTLEMILKLIAFKPRGYFGDPWNVFDFLIVIGSIIDVILSEIDTLLASSGGLYCLGGGCGNVDPDESARISSAFFRLFRVMRLIKLLSRAEGVRTLLWTFIKSFQALPYVALLIVMLFFIYAVIGMQMFGKIAMVDGTQINRNNNFQTFPQAVLLLFRCATGEAWQEILLACSYGKRCDPESDYAPGEEYACGTNFAYYYFISFYMLCAFLIINLFVAVIMDNFDYLTRDWSILGPHHLDEFKAIWAEYDPEAKGRIKHLDVVTLLRRIQPPLGFGKFCPHRVACKRLVGMNMPLNSDGTVTFNATLFALVRTALKIKTEGNFEQANEELRAIIKKIWKRTSMKLLDQVIPPIGDDEVTVGKFYATFLIQEHFRKFMKRQEEYYGYRPKKDTVQIQAGLRTIEEEAAPEIHRAISGDLTAEEELERAMVEAAMEEGIFRRTGGLFGQVDNFLERTNSLPPVMANQRPLQFAEMEMEELESPVFLEDFPQNPGTHPLARANTNNANANVAYGNSSHRNSPVFSSIRYERELLEEAGRPVTREGPFSQPCSVSGVNSRSHVDKLERQMSQRRMPKGQVPPSPCQLSQEKHPVHEEGKGPRSWSTETSDSESFEERVPRNSAHKCTAPATTMLIQEALVRGGLDSLAADANFVMATGQALADACQMEPEEVEVAATELLKRESPKGGAMPREP</sequence>
<proteinExistence type="evidence at protein level"/>
<comment type="function">
    <text evidence="6">Pore-forming, alpha-1S subunit of the voltage-gated calcium channel that gives rise to L-type calcium currents in skeletal muscle. Calcium channels containing the alpha-1S subunit play an important role in excitation-contraction coupling in skeletal muscle via their interaction with RYR1, which triggers Ca(2+) release from the sarcplasmic reticulum and ultimately results in muscle contraction. Long-lasting (L-type) calcium channels belong to the 'high-voltage activated' (HVA) group.</text>
</comment>
<comment type="catalytic activity">
    <reaction evidence="6">
        <text>Ca(2+)(in) = Ca(2+)(out)</text>
        <dbReference type="Rhea" id="RHEA:29671"/>
        <dbReference type="ChEBI" id="CHEBI:29108"/>
    </reaction>
</comment>
<comment type="activity regulation">
    <text evidence="1 8">Channel activity is blocked by dihydropyridines (DHP), phenylalkylamines, and by benzothiazepines.</text>
</comment>
<comment type="subunit">
    <text evidence="1 2 3">Component of a calcium channel complex consisting of a pore-forming alpha subunit (CACNA1S) and the ancillary subunits CACNB1 or CACNB2, CACNG1 and CACNA2D1. The channel complex contains alpha, beta, gamma and delta subunits in a 1:1:1:1 ratio, i.e. it contains either CACNB1 or CACNB2 (By similarity). CACNA1S channel activity is modulated by the auxiliary subunits (CACNB1 or CACNB2, CACNG1 and CACNA2D1). Interacts with DYSF and JSRP1 (By similarity). Interacts with RYR1. Interacts with STAC, STAC2 and STAC3 (via their SH3 domains) (By similarity). Interacts with CALM (By similarity).</text>
</comment>
<comment type="subcellular location">
    <subcellularLocation>
        <location evidence="1">Cell membrane</location>
        <location evidence="1">Sarcolemma</location>
        <location evidence="1">T-tubule</location>
        <topology evidence="1">Multi-pass membrane protein</topology>
    </subcellularLocation>
</comment>
<comment type="alternative products">
    <event type="alternative splicing"/>
    <isoform>
        <id>Q02485-1</id>
        <name>1</name>
        <sequence type="displayed"/>
    </isoform>
    <isoform>
        <id>Q02485-2</id>
        <name>ROB1</name>
        <sequence type="described" ref="VSP_000939"/>
    </isoform>
</comment>
<comment type="tissue specificity">
    <text>Skeletal muscle specific.</text>
</comment>
<comment type="domain">
    <text evidence="1">Each of the four internal repeats contains five hydrophobic transmembrane segments (S1, S2, S3, S5, S6) and one positively charged transmembrane segment (S4). S4 segments probably represent the voltage-sensor and are characterized by a series of positively charged amino acids at every third position.</text>
</comment>
<comment type="domain">
    <text evidence="1">The loop between repeats II and III interacts with the ryanodine receptor, and is therefore important for calcium release from the endoplasmic reticulum necessary for muscle contraction.</text>
</comment>
<comment type="PTM">
    <text evidence="1">The alpha-1S subunit is found in two isoforms in the skeletal muscle: a minor form of 212 kDa containing the complete amino acid sequence, and a major form of 190 kDa derived from the full-length form by post-translational proteolysis close to Phe-1690.</text>
</comment>
<comment type="PTM">
    <text evidence="1">Phosphorylated. Phosphorylation by PKA activates the calcium channel. Both the minor and major forms are phosphorylated in vitro by PKA. Phosphorylation at Ser-1575 is involved in beta-adrenergic-mediated regulation of the channel.</text>
</comment>
<comment type="similarity">
    <text evidence="8">Belongs to the calcium channel alpha-1 subunit (TC 1.A.1.11) family. CACNA1S subfamily.</text>
</comment>
<feature type="chain" id="PRO_0000053946" description="Voltage-dependent L-type calcium channel subunit alpha-1S">
    <location>
        <begin position="1"/>
        <end position="1850"/>
    </location>
</feature>
<feature type="topological domain" description="Cytoplasmic" evidence="8">
    <location>
        <begin position="1"/>
        <end position="51"/>
    </location>
</feature>
<feature type="transmembrane region" description="Helical; Name=S1 of repeat I" evidence="1">
    <location>
        <begin position="52"/>
        <end position="70"/>
    </location>
</feature>
<feature type="topological domain" description="Extracellular" evidence="8">
    <location>
        <begin position="71"/>
        <end position="85"/>
    </location>
</feature>
<feature type="transmembrane region" description="Helical; Name=S2 of repeat I" evidence="1">
    <location>
        <begin position="86"/>
        <end position="106"/>
    </location>
</feature>
<feature type="topological domain" description="Cytoplasmic" evidence="8">
    <location>
        <begin position="107"/>
        <end position="115"/>
    </location>
</feature>
<feature type="transmembrane region" description="Helical; Name=S3 of repeat I" evidence="1">
    <location>
        <begin position="116"/>
        <end position="136"/>
    </location>
</feature>
<feature type="topological domain" description="Extracellular" evidence="8">
    <location>
        <begin position="137"/>
        <end position="160"/>
    </location>
</feature>
<feature type="transmembrane region" description="Helical; Name=S4 of repeat I" evidence="1">
    <location>
        <begin position="161"/>
        <end position="179"/>
    </location>
</feature>
<feature type="topological domain" description="Cytoplasmic" evidence="8">
    <location>
        <begin position="180"/>
        <end position="196"/>
    </location>
</feature>
<feature type="transmembrane region" description="Helical; Name=S5 of repeat I" evidence="1">
    <location>
        <begin position="197"/>
        <end position="218"/>
    </location>
</feature>
<feature type="topological domain" description="Extracellular" evidence="8">
    <location>
        <begin position="219"/>
        <end position="279"/>
    </location>
</feature>
<feature type="intramembrane region" description="Pore-forming" evidence="1">
    <location>
        <begin position="280"/>
        <end position="301"/>
    </location>
</feature>
<feature type="topological domain" description="Extracellular" evidence="8">
    <location>
        <begin position="302"/>
        <end position="309"/>
    </location>
</feature>
<feature type="transmembrane region" description="Helical; Name=S6 of repeat I" evidence="1">
    <location>
        <begin position="310"/>
        <end position="330"/>
    </location>
</feature>
<feature type="topological domain" description="Cytoplasmic" evidence="8">
    <location>
        <begin position="331"/>
        <end position="432"/>
    </location>
</feature>
<feature type="transmembrane region" description="Helical; Name=S1 of repeat II" evidence="1">
    <location>
        <begin position="433"/>
        <end position="451"/>
    </location>
</feature>
<feature type="topological domain" description="Extracellular" evidence="8">
    <location>
        <begin position="452"/>
        <end position="462"/>
    </location>
</feature>
<feature type="transmembrane region" description="Helical; Name=S2 of repeat II" evidence="1">
    <location>
        <begin position="463"/>
        <end position="483"/>
    </location>
</feature>
<feature type="topological domain" description="Cytoplasmic" evidence="8">
    <location>
        <begin position="484"/>
        <end position="494"/>
    </location>
</feature>
<feature type="transmembrane region" description="Helical; Name=S3 of repeat II" evidence="1">
    <location>
        <begin position="495"/>
        <end position="514"/>
    </location>
</feature>
<feature type="topological domain" description="Extracellular" evidence="8">
    <location>
        <begin position="515"/>
        <end position="523"/>
    </location>
</feature>
<feature type="transmembrane region" description="Helical; Name=S4 of repeat II" evidence="1">
    <location>
        <begin position="524"/>
        <end position="542"/>
    </location>
</feature>
<feature type="topological domain" description="Cytoplasmic" evidence="8">
    <location>
        <begin position="543"/>
        <end position="561"/>
    </location>
</feature>
<feature type="transmembrane region" description="Helical; Name=S5 of repeat II" evidence="1">
    <location>
        <begin position="562"/>
        <end position="581"/>
    </location>
</feature>
<feature type="topological domain" description="Extracellular" evidence="8">
    <location>
        <begin position="582"/>
        <end position="601"/>
    </location>
</feature>
<feature type="intramembrane region" description="Pore-forming" evidence="1">
    <location>
        <begin position="602"/>
        <end position="623"/>
    </location>
</feature>
<feature type="topological domain" description="Extracellular" evidence="8">
    <location>
        <begin position="624"/>
        <end position="633"/>
    </location>
</feature>
<feature type="transmembrane region" description="Helical; Name=S6 of repeat II" evidence="1">
    <location>
        <begin position="634"/>
        <end position="653"/>
    </location>
</feature>
<feature type="topological domain" description="Cytoplasmic" evidence="8">
    <location>
        <begin position="654"/>
        <end position="799"/>
    </location>
</feature>
<feature type="transmembrane region" description="Helical; Name=S1 of repeat III" evidence="1">
    <location>
        <begin position="800"/>
        <end position="818"/>
    </location>
</feature>
<feature type="topological domain" description="Extracellular" evidence="8">
    <location>
        <begin position="819"/>
        <end position="830"/>
    </location>
</feature>
<feature type="transmembrane region" description="Helical; Name=S2 of repeat III" evidence="1">
    <location>
        <begin position="831"/>
        <end position="850"/>
    </location>
</feature>
<feature type="topological domain" description="Cytoplasmic" evidence="8">
    <location>
        <begin position="851"/>
        <end position="866"/>
    </location>
</feature>
<feature type="transmembrane region" description="Helical; Name=S3 of repeat III" evidence="1">
    <location>
        <begin position="867"/>
        <end position="885"/>
    </location>
</feature>
<feature type="topological domain" description="Extracellular" evidence="8">
    <location>
        <begin position="886"/>
        <end position="892"/>
    </location>
</feature>
<feature type="transmembrane region" description="Helical; Name=S4 of repeat III" evidence="1">
    <location>
        <begin position="893"/>
        <end position="911"/>
    </location>
</feature>
<feature type="topological domain" description="Cytoplasmic" evidence="8">
    <location>
        <begin position="912"/>
        <end position="930"/>
    </location>
</feature>
<feature type="transmembrane region" description="Helical; Name=S5 of repeat III" evidence="1">
    <location>
        <begin position="931"/>
        <end position="950"/>
    </location>
</feature>
<feature type="topological domain" description="Extracellular" evidence="8">
    <location>
        <begin position="951"/>
        <end position="1000"/>
    </location>
</feature>
<feature type="intramembrane region" description="Pore-forming" evidence="1">
    <location>
        <begin position="1001"/>
        <end position="1021"/>
    </location>
</feature>
<feature type="topological domain" description="Extracellular" evidence="8">
    <location>
        <begin position="1022"/>
        <end position="1038"/>
    </location>
</feature>
<feature type="transmembrane region" description="Helical; Name=S6 of repeat III" evidence="1">
    <location>
        <begin position="1039"/>
        <end position="1060"/>
    </location>
</feature>
<feature type="topological domain" description="Cytoplasmic" evidence="8">
    <location>
        <begin position="1061"/>
        <end position="1118"/>
    </location>
</feature>
<feature type="transmembrane region" description="Helical; Name=S1 of repeat IV" evidence="1">
    <location>
        <begin position="1119"/>
        <end position="1140"/>
    </location>
</feature>
<feature type="topological domain" description="Extracellular" evidence="8">
    <location>
        <begin position="1141"/>
        <end position="1148"/>
    </location>
</feature>
<feature type="transmembrane region" description="Helical; Name=S2 of repeat IV" evidence="1">
    <location>
        <begin position="1149"/>
        <end position="1170"/>
    </location>
</feature>
<feature type="topological domain" description="Cytoplasmic" evidence="8">
    <location>
        <begin position="1171"/>
        <end position="1180"/>
    </location>
</feature>
<feature type="transmembrane region" description="Helical; Name=S3 of repeat IV" evidence="1">
    <location>
        <begin position="1181"/>
        <end position="1200"/>
    </location>
</feature>
<feature type="topological domain" description="Extracellular" evidence="8">
    <location>
        <begin position="1201"/>
        <end position="1231"/>
    </location>
</feature>
<feature type="transmembrane region" description="Helical; Name=S4 of repeat IV" evidence="1">
    <location>
        <begin position="1232"/>
        <end position="1250"/>
    </location>
</feature>
<feature type="topological domain" description="Cytoplasmic" evidence="8">
    <location>
        <begin position="1251"/>
        <end position="1268"/>
    </location>
</feature>
<feature type="transmembrane region" description="Helical; Name=S5 of repeat IV" evidence="1">
    <location>
        <begin position="1269"/>
        <end position="1289"/>
    </location>
</feature>
<feature type="topological domain" description="Extracellular" evidence="8">
    <location>
        <begin position="1290"/>
        <end position="1311"/>
    </location>
</feature>
<feature type="intramembrane region" description="Pore-forming" evidence="1">
    <location>
        <begin position="1312"/>
        <end position="1330"/>
    </location>
</feature>
<feature type="topological domain" description="Extracellular" evidence="8">
    <location>
        <begin position="1331"/>
        <end position="1356"/>
    </location>
</feature>
<feature type="transmembrane region" description="Helical; Name=S6 of repeat IV" evidence="1">
    <location>
        <begin position="1357"/>
        <end position="1381"/>
    </location>
</feature>
<feature type="topological domain" description="Cytoplasmic" evidence="8">
    <location>
        <begin position="1382"/>
        <end position="1850"/>
    </location>
</feature>
<feature type="repeat" description="I" evidence="8">
    <location>
        <begin position="38"/>
        <end position="337"/>
    </location>
</feature>
<feature type="repeat" description="II" evidence="8">
    <location>
        <begin position="418"/>
        <end position="664"/>
    </location>
</feature>
<feature type="repeat" description="III" evidence="8">
    <location>
        <begin position="786"/>
        <end position="1068"/>
    </location>
</feature>
<feature type="repeat" description="IV" evidence="8">
    <location>
        <begin position="1105"/>
        <end position="1384"/>
    </location>
</feature>
<feature type="region of interest" description="Disordered" evidence="5">
    <location>
        <begin position="1"/>
        <end position="23"/>
    </location>
</feature>
<feature type="region of interest" description="Binding to the beta subunit" evidence="2">
    <location>
        <begin position="357"/>
        <end position="374"/>
    </location>
</feature>
<feature type="region of interest" description="Disordered" evidence="5">
    <location>
        <begin position="673"/>
        <end position="717"/>
    </location>
</feature>
<feature type="region of interest" description="Disordered" evidence="5">
    <location>
        <begin position="731"/>
        <end position="758"/>
    </location>
</feature>
<feature type="region of interest" description="Dihydropyridine binding" evidence="1">
    <location>
        <begin position="988"/>
        <end position="1077"/>
    </location>
</feature>
<feature type="region of interest" description="Dihydropyridine binding" evidence="1">
    <location>
        <begin position="1337"/>
        <end position="1403"/>
    </location>
</feature>
<feature type="region of interest" description="Phenylalkylamine binding" evidence="1">
    <location>
        <begin position="1349"/>
        <end position="1391"/>
    </location>
</feature>
<feature type="region of interest" description="Interaction with calmodulin" evidence="3">
    <location>
        <begin position="1522"/>
        <end position="1542"/>
    </location>
</feature>
<feature type="region of interest" description="Disordered" evidence="5">
    <location>
        <begin position="1697"/>
        <end position="1779"/>
    </location>
</feature>
<feature type="short sequence motif" description="Selectivity filter of repeat I" evidence="1">
    <location>
        <begin position="290"/>
        <end position="293"/>
    </location>
</feature>
<feature type="short sequence motif" description="Selectivity filter of repeat II" evidence="1">
    <location>
        <begin position="612"/>
        <end position="615"/>
    </location>
</feature>
<feature type="short sequence motif" description="Selectivity filter of repeat III" evidence="1">
    <location>
        <begin position="1012"/>
        <end position="1015"/>
    </location>
</feature>
<feature type="short sequence motif" description="Selectivity filter of repeat IV" evidence="1">
    <location>
        <begin position="1321"/>
        <end position="1324"/>
    </location>
</feature>
<feature type="compositionally biased region" description="Basic and acidic residues" evidence="5">
    <location>
        <begin position="690"/>
        <end position="711"/>
    </location>
</feature>
<feature type="compositionally biased region" description="Acidic residues" evidence="5">
    <location>
        <begin position="742"/>
        <end position="751"/>
    </location>
</feature>
<feature type="compositionally biased region" description="Polar residues" evidence="5">
    <location>
        <begin position="1706"/>
        <end position="1716"/>
    </location>
</feature>
<feature type="compositionally biased region" description="Basic and acidic residues" evidence="5">
    <location>
        <begin position="1717"/>
        <end position="1726"/>
    </location>
</feature>
<feature type="compositionally biased region" description="Basic and acidic residues" evidence="5">
    <location>
        <begin position="1745"/>
        <end position="1756"/>
    </location>
</feature>
<feature type="binding site" evidence="1">
    <location>
        <position position="292"/>
    </location>
    <ligand>
        <name>Ca(2+)</name>
        <dbReference type="ChEBI" id="CHEBI:29108"/>
    </ligand>
</feature>
<feature type="binding site" evidence="1">
    <location>
        <position position="614"/>
    </location>
    <ligand>
        <name>Ca(2+)</name>
        <dbReference type="ChEBI" id="CHEBI:29108"/>
    </ligand>
</feature>
<feature type="binding site" evidence="1">
    <location>
        <position position="1014"/>
    </location>
    <ligand>
        <name>Ca(2+)</name>
        <dbReference type="ChEBI" id="CHEBI:29108"/>
    </ligand>
</feature>
<feature type="modified residue" description="Phosphoserine" evidence="10">
    <location>
        <position position="393"/>
    </location>
</feature>
<feature type="modified residue" description="Phosphoserine" evidence="10">
    <location>
        <position position="397"/>
    </location>
</feature>
<feature type="modified residue" description="Phosphoserine; by PKA" evidence="1">
    <location>
        <position position="687"/>
    </location>
</feature>
<feature type="modified residue" description="Phosphoserine; by PKA and CAMK2" evidence="1 10">
    <location>
        <position position="1575"/>
    </location>
</feature>
<feature type="modified residue" description="Phosphothreonine" evidence="10">
    <location>
        <position position="1579"/>
    </location>
</feature>
<feature type="modified residue" description="Phosphoserine; by PKA" evidence="1 10">
    <location>
        <position position="1617"/>
    </location>
</feature>
<feature type="glycosylation site" description="N-linked (GlcNAc...) asparagine" evidence="4">
    <location>
        <position position="1141"/>
    </location>
</feature>
<feature type="disulfide bond" evidence="1">
    <location>
        <begin position="226"/>
        <end position="254"/>
    </location>
</feature>
<feature type="disulfide bond" evidence="1">
    <location>
        <begin position="245"/>
        <end position="261"/>
    </location>
</feature>
<feature type="disulfide bond" evidence="1">
    <location>
        <begin position="957"/>
        <end position="968"/>
    </location>
</feature>
<feature type="disulfide bond" evidence="1">
    <location>
        <begin position="1338"/>
        <end position="1352"/>
    </location>
</feature>
<feature type="splice variant" id="VSP_000939" description="In isoform ROB1." evidence="7">
    <location>
        <begin position="1204"/>
        <end position="1222"/>
    </location>
</feature>
<feature type="sequence conflict" description="In Ref. 2; AAA40844." evidence="8" ref="2">
    <original>I</original>
    <variation>V</variation>
    <location>
        <position position="714"/>
    </location>
</feature>
<feature type="sequence conflict" description="In Ref. 4; AAA89158." evidence="8" ref="4">
    <original>I</original>
    <variation>T</variation>
    <location>
        <position position="1261"/>
    </location>
</feature>
<feature type="sequence conflict" description="In Ref. 4; AAA89158." evidence="8" ref="4">
    <original>E</original>
    <variation>A</variation>
    <location>
        <position position="1323"/>
    </location>
</feature>
<feature type="sequence conflict" description="In Ref. 2; AAA40844." ref="2">
    <original>AMPREP</original>
    <variation>PCPGSLEPKVLPWAA</variation>
    <location>
        <begin position="1845"/>
        <end position="1850"/>
    </location>
</feature>
<protein>
    <recommendedName>
        <fullName>Voltage-dependent L-type calcium channel subunit alpha-1S</fullName>
    </recommendedName>
    <alternativeName>
        <fullName>Calcium channel, L type, alpha-1 polypeptide, isoform 3, skeletal muscle</fullName>
    </alternativeName>
    <alternativeName>
        <fullName>ROB1</fullName>
    </alternativeName>
    <alternativeName>
        <fullName>Voltage-gated calcium channel subunit alpha Cav1.1</fullName>
    </alternativeName>
</protein>